<feature type="chain" id="PRO_0000332050" description="Chaperonin GroEL">
    <location>
        <begin position="1"/>
        <end position="548"/>
    </location>
</feature>
<feature type="binding site" evidence="1">
    <location>
        <begin position="30"/>
        <end position="33"/>
    </location>
    <ligand>
        <name>ATP</name>
        <dbReference type="ChEBI" id="CHEBI:30616"/>
    </ligand>
</feature>
<feature type="binding site" evidence="1">
    <location>
        <position position="51"/>
    </location>
    <ligand>
        <name>ATP</name>
        <dbReference type="ChEBI" id="CHEBI:30616"/>
    </ligand>
</feature>
<feature type="binding site" evidence="1">
    <location>
        <begin position="87"/>
        <end position="91"/>
    </location>
    <ligand>
        <name>ATP</name>
        <dbReference type="ChEBI" id="CHEBI:30616"/>
    </ligand>
</feature>
<feature type="binding site" evidence="1">
    <location>
        <position position="415"/>
    </location>
    <ligand>
        <name>ATP</name>
        <dbReference type="ChEBI" id="CHEBI:30616"/>
    </ligand>
</feature>
<feature type="binding site" evidence="1">
    <location>
        <position position="495"/>
    </location>
    <ligand>
        <name>ATP</name>
        <dbReference type="ChEBI" id="CHEBI:30616"/>
    </ligand>
</feature>
<gene>
    <name evidence="1" type="primary">groEL</name>
    <name evidence="1" type="synonym">groL</name>
    <name type="ordered locus">Patl_3753</name>
</gene>
<comment type="function">
    <text evidence="1">Together with its co-chaperonin GroES, plays an essential role in assisting protein folding. The GroEL-GroES system forms a nano-cage that allows encapsulation of the non-native substrate proteins and provides a physical environment optimized to promote and accelerate protein folding.</text>
</comment>
<comment type="catalytic activity">
    <reaction evidence="1">
        <text>ATP + H2O + a folded polypeptide = ADP + phosphate + an unfolded polypeptide.</text>
        <dbReference type="EC" id="5.6.1.7"/>
    </reaction>
</comment>
<comment type="subunit">
    <text evidence="1">Forms a cylinder of 14 subunits composed of two heptameric rings stacked back-to-back. Interacts with the co-chaperonin GroES.</text>
</comment>
<comment type="subcellular location">
    <subcellularLocation>
        <location evidence="1">Cytoplasm</location>
    </subcellularLocation>
</comment>
<comment type="similarity">
    <text evidence="1">Belongs to the chaperonin (HSP60) family.</text>
</comment>
<accession>Q15PD3</accession>
<reference key="1">
    <citation type="submission" date="2006-06" db="EMBL/GenBank/DDBJ databases">
        <title>Complete sequence of Pseudoalteromonas atlantica T6c.</title>
        <authorList>
            <consortium name="US DOE Joint Genome Institute"/>
            <person name="Copeland A."/>
            <person name="Lucas S."/>
            <person name="Lapidus A."/>
            <person name="Barry K."/>
            <person name="Detter J.C."/>
            <person name="Glavina del Rio T."/>
            <person name="Hammon N."/>
            <person name="Israni S."/>
            <person name="Dalin E."/>
            <person name="Tice H."/>
            <person name="Pitluck S."/>
            <person name="Saunders E."/>
            <person name="Brettin T."/>
            <person name="Bruce D."/>
            <person name="Han C."/>
            <person name="Tapia R."/>
            <person name="Gilna P."/>
            <person name="Schmutz J."/>
            <person name="Larimer F."/>
            <person name="Land M."/>
            <person name="Hauser L."/>
            <person name="Kyrpides N."/>
            <person name="Kim E."/>
            <person name="Karls A.C."/>
            <person name="Bartlett D."/>
            <person name="Higgins B.P."/>
            <person name="Richardson P."/>
        </authorList>
    </citation>
    <scope>NUCLEOTIDE SEQUENCE [LARGE SCALE GENOMIC DNA]</scope>
    <source>
        <strain>T6c / ATCC BAA-1087</strain>
    </source>
</reference>
<protein>
    <recommendedName>
        <fullName evidence="1">Chaperonin GroEL</fullName>
        <ecNumber evidence="1">5.6.1.7</ecNumber>
    </recommendedName>
    <alternativeName>
        <fullName evidence="1">60 kDa chaperonin</fullName>
    </alternativeName>
    <alternativeName>
        <fullName evidence="1">Chaperonin-60</fullName>
        <shortName evidence="1">Cpn60</shortName>
    </alternativeName>
</protein>
<evidence type="ECO:0000255" key="1">
    <source>
        <dbReference type="HAMAP-Rule" id="MF_00600"/>
    </source>
</evidence>
<organism>
    <name type="scientific">Pseudoalteromonas atlantica (strain T6c / ATCC BAA-1087)</name>
    <dbReference type="NCBI Taxonomy" id="3042615"/>
    <lineage>
        <taxon>Bacteria</taxon>
        <taxon>Pseudomonadati</taxon>
        <taxon>Pseudomonadota</taxon>
        <taxon>Gammaproteobacteria</taxon>
        <taxon>Alteromonadales</taxon>
        <taxon>Alteromonadaceae</taxon>
        <taxon>Paraglaciecola</taxon>
    </lineage>
</organism>
<sequence>MAAKEVRFSDDARVKMLAGVNILANAVKVTLGPKGRNVVLDKSFGAPTITKDGVSVAKEIELEDKFENMGAQMVKEVASKANDEAGDGTTTATVLAQSIVTEGLKAVAAGMNPMDLKRGIDKAVIAAVEQLKTLSVPCADSKAIAQVGTISANSDTEVGDLIAEAMDKVGKEGVITVEEGQSLQNELEVVEGMQFDRGYLSPYFMNNQENGTVELDSPFILLVDKKVSNIRELLPTLEAVAKASKPLLIIAEDVEGEALATLVVNNMRGIVKVAAVKAPGFGDRRKAMLQDLATLTGGTVISEEIGLELEKVTLEDLGTAKRVVINKDNTTVVDGAGEEEAIQGRVAQIRAQIEESSSDYDKEKLQERLAKLAGGVAVIKVGAATEVEMKEKKDRVEDALHATRAAVEEGVVAGGGVALVRAASKIVDLQGDNEDQTHGIKLLLRAMESPMRQIAANAGAEASVVTNAVKNGADNYGYNAGNDTYGDMLEMGILDPTKVTRSALQFAASIASLMITTEAMIAEAPKEDAPAMPDMGGMGGMGGMGGMM</sequence>
<name>CH60_PSEA6</name>
<proteinExistence type="inferred from homology"/>
<dbReference type="EC" id="5.6.1.7" evidence="1"/>
<dbReference type="EMBL" id="CP000388">
    <property type="protein sequence ID" value="ABG42255.1"/>
    <property type="molecule type" value="Genomic_DNA"/>
</dbReference>
<dbReference type="RefSeq" id="WP_011576467.1">
    <property type="nucleotide sequence ID" value="NC_008228.1"/>
</dbReference>
<dbReference type="SMR" id="Q15PD3"/>
<dbReference type="STRING" id="342610.Patl_3753"/>
<dbReference type="KEGG" id="pat:Patl_3753"/>
<dbReference type="eggNOG" id="COG0459">
    <property type="taxonomic scope" value="Bacteria"/>
</dbReference>
<dbReference type="HOGENOM" id="CLU_016503_3_0_6"/>
<dbReference type="OrthoDB" id="9766614at2"/>
<dbReference type="Proteomes" id="UP000001981">
    <property type="component" value="Chromosome"/>
</dbReference>
<dbReference type="GO" id="GO:0005737">
    <property type="term" value="C:cytoplasm"/>
    <property type="evidence" value="ECO:0007669"/>
    <property type="project" value="UniProtKB-SubCell"/>
</dbReference>
<dbReference type="GO" id="GO:0005524">
    <property type="term" value="F:ATP binding"/>
    <property type="evidence" value="ECO:0007669"/>
    <property type="project" value="UniProtKB-UniRule"/>
</dbReference>
<dbReference type="GO" id="GO:0140662">
    <property type="term" value="F:ATP-dependent protein folding chaperone"/>
    <property type="evidence" value="ECO:0007669"/>
    <property type="project" value="InterPro"/>
</dbReference>
<dbReference type="GO" id="GO:0016853">
    <property type="term" value="F:isomerase activity"/>
    <property type="evidence" value="ECO:0007669"/>
    <property type="project" value="UniProtKB-KW"/>
</dbReference>
<dbReference type="GO" id="GO:0051082">
    <property type="term" value="F:unfolded protein binding"/>
    <property type="evidence" value="ECO:0007669"/>
    <property type="project" value="UniProtKB-UniRule"/>
</dbReference>
<dbReference type="GO" id="GO:0042026">
    <property type="term" value="P:protein refolding"/>
    <property type="evidence" value="ECO:0007669"/>
    <property type="project" value="UniProtKB-UniRule"/>
</dbReference>
<dbReference type="CDD" id="cd03344">
    <property type="entry name" value="GroEL"/>
    <property type="match status" value="1"/>
</dbReference>
<dbReference type="FunFam" id="1.10.560.10:FF:000001">
    <property type="entry name" value="60 kDa chaperonin"/>
    <property type="match status" value="1"/>
</dbReference>
<dbReference type="FunFam" id="3.50.7.10:FF:000001">
    <property type="entry name" value="60 kDa chaperonin"/>
    <property type="match status" value="1"/>
</dbReference>
<dbReference type="Gene3D" id="3.50.7.10">
    <property type="entry name" value="GroEL"/>
    <property type="match status" value="1"/>
</dbReference>
<dbReference type="Gene3D" id="1.10.560.10">
    <property type="entry name" value="GroEL-like equatorial domain"/>
    <property type="match status" value="1"/>
</dbReference>
<dbReference type="Gene3D" id="3.30.260.10">
    <property type="entry name" value="TCP-1-like chaperonin intermediate domain"/>
    <property type="match status" value="1"/>
</dbReference>
<dbReference type="HAMAP" id="MF_00600">
    <property type="entry name" value="CH60"/>
    <property type="match status" value="1"/>
</dbReference>
<dbReference type="InterPro" id="IPR018370">
    <property type="entry name" value="Chaperonin_Cpn60_CS"/>
</dbReference>
<dbReference type="InterPro" id="IPR001844">
    <property type="entry name" value="Cpn60/GroEL"/>
</dbReference>
<dbReference type="InterPro" id="IPR002423">
    <property type="entry name" value="Cpn60/GroEL/TCP-1"/>
</dbReference>
<dbReference type="InterPro" id="IPR027409">
    <property type="entry name" value="GroEL-like_apical_dom_sf"/>
</dbReference>
<dbReference type="InterPro" id="IPR027413">
    <property type="entry name" value="GROEL-like_equatorial_sf"/>
</dbReference>
<dbReference type="InterPro" id="IPR027410">
    <property type="entry name" value="TCP-1-like_intermed_sf"/>
</dbReference>
<dbReference type="NCBIfam" id="TIGR02348">
    <property type="entry name" value="GroEL"/>
    <property type="match status" value="1"/>
</dbReference>
<dbReference type="NCBIfam" id="NF000592">
    <property type="entry name" value="PRK00013.1"/>
    <property type="match status" value="1"/>
</dbReference>
<dbReference type="NCBIfam" id="NF009487">
    <property type="entry name" value="PRK12849.1"/>
    <property type="match status" value="1"/>
</dbReference>
<dbReference type="NCBIfam" id="NF009488">
    <property type="entry name" value="PRK12850.1"/>
    <property type="match status" value="1"/>
</dbReference>
<dbReference type="NCBIfam" id="NF009489">
    <property type="entry name" value="PRK12851.1"/>
    <property type="match status" value="1"/>
</dbReference>
<dbReference type="PANTHER" id="PTHR45633">
    <property type="entry name" value="60 KDA HEAT SHOCK PROTEIN, MITOCHONDRIAL"/>
    <property type="match status" value="1"/>
</dbReference>
<dbReference type="Pfam" id="PF00118">
    <property type="entry name" value="Cpn60_TCP1"/>
    <property type="match status" value="1"/>
</dbReference>
<dbReference type="PRINTS" id="PR00298">
    <property type="entry name" value="CHAPERONIN60"/>
</dbReference>
<dbReference type="SUPFAM" id="SSF52029">
    <property type="entry name" value="GroEL apical domain-like"/>
    <property type="match status" value="1"/>
</dbReference>
<dbReference type="SUPFAM" id="SSF48592">
    <property type="entry name" value="GroEL equatorial domain-like"/>
    <property type="match status" value="1"/>
</dbReference>
<dbReference type="SUPFAM" id="SSF54849">
    <property type="entry name" value="GroEL-intermediate domain like"/>
    <property type="match status" value="1"/>
</dbReference>
<dbReference type="PROSITE" id="PS00296">
    <property type="entry name" value="CHAPERONINS_CPN60"/>
    <property type="match status" value="1"/>
</dbReference>
<keyword id="KW-0067">ATP-binding</keyword>
<keyword id="KW-0143">Chaperone</keyword>
<keyword id="KW-0963">Cytoplasm</keyword>
<keyword id="KW-0413">Isomerase</keyword>
<keyword id="KW-0547">Nucleotide-binding</keyword>